<sequence>MSSEKVRASHILIKHQGSRRKSSWKDPDGSLISATTRDDAVSQLQSLRQELLSDPASFSDLASRHSHCSSAKRGGDLGPFGRGQMQKPFEEATFALKVGEISDIVDTDSGVHIIKRTG</sequence>
<protein>
    <recommendedName>
        <fullName>Peptidyl-prolyl cis-trans isomerase Pin1</fullName>
        <shortName>PPIase Pin1</shortName>
        <ecNumber>5.2.1.8</ecNumber>
    </recommendedName>
    <alternativeName>
        <fullName>DlPar13</fullName>
    </alternativeName>
    <alternativeName>
        <fullName>Rotamase Pin1</fullName>
    </alternativeName>
</protein>
<reference key="1">
    <citation type="journal article" date="2001" name="J. Biol. Chem.">
        <title>Functional replacement of the essential ess1 in yeast by the plant parvulin DlPar13.</title>
        <authorList>
            <person name="Metzner M."/>
            <person name="Stoller G."/>
            <person name="Ruecknagel P."/>
            <person name="Lu K.P."/>
            <person name="Fischer G."/>
            <person name="Luckner M."/>
            <person name="Kuellertz G."/>
        </authorList>
    </citation>
    <scope>NUCLEOTIDE SEQUENCE [MRNA]</scope>
    <scope>PARTIAL PROTEIN SEQUENCE</scope>
    <scope>TISSUE SPECIFICITY</scope>
    <scope>SUBCELLULAR LOCATION</scope>
    <scope>FUNCTION</scope>
    <source>
        <strain>cv. VIII</strain>
    </source>
</reference>
<comment type="function">
    <text evidence="3">Prolyl cis/trans isomerase with specificity for phospho-Ser-Pro bonds.</text>
</comment>
<comment type="catalytic activity">
    <reaction>
        <text>[protein]-peptidylproline (omega=180) = [protein]-peptidylproline (omega=0)</text>
        <dbReference type="Rhea" id="RHEA:16237"/>
        <dbReference type="Rhea" id="RHEA-COMP:10747"/>
        <dbReference type="Rhea" id="RHEA-COMP:10748"/>
        <dbReference type="ChEBI" id="CHEBI:83833"/>
        <dbReference type="ChEBI" id="CHEBI:83834"/>
        <dbReference type="EC" id="5.2.1.8"/>
    </reaction>
</comment>
<comment type="activity regulation">
    <text>Inhibited in vitro by juglone.</text>
</comment>
<comment type="subcellular location">
    <subcellularLocation>
        <location evidence="3">Cytoplasm</location>
    </subcellularLocation>
    <subcellularLocation>
        <location evidence="3">Nucleus</location>
    </subcellularLocation>
</comment>
<comment type="tissue specificity">
    <text evidence="3">Expressed in roots, stems, leaves, flowers and seedlings.</text>
</comment>
<comment type="PTM">
    <text>The N-terminus is blocked.</text>
</comment>
<comment type="miscellaneous">
    <text>Like all plant Pin1-type PPIases, do not contain the N-terminal WW domain found in other eukaryotic parvulins, but contains a four-amino acid insertion next to the phospho-specific recognition site of the active site. These extra amino acids may be important for mediating the substrate interaction of plant enzymes.</text>
</comment>
<comment type="miscellaneous">
    <text>Three amino acid residues (P79S, E91D and A95G) differ when compared with the partial sequence of purified protein. The existence of two or more genes coding for this protein is not exluded.</text>
</comment>
<comment type="similarity">
    <text evidence="4">Belongs to the PpiC/parvulin rotamase family.</text>
</comment>
<proteinExistence type="evidence at protein level"/>
<keyword id="KW-0963">Cytoplasm</keyword>
<keyword id="KW-0903">Direct protein sequencing</keyword>
<keyword id="KW-0413">Isomerase</keyword>
<keyword id="KW-0539">Nucleus</keyword>
<keyword id="KW-0697">Rotamase</keyword>
<name>PIN1_DIGLA</name>
<evidence type="ECO:0000255" key="1">
    <source>
        <dbReference type="PROSITE-ProRule" id="PRU00278"/>
    </source>
</evidence>
<evidence type="ECO:0000256" key="2">
    <source>
        <dbReference type="SAM" id="MobiDB-lite"/>
    </source>
</evidence>
<evidence type="ECO:0000269" key="3">
    <source>
    </source>
</evidence>
<evidence type="ECO:0000305" key="4"/>
<accession>Q9LEK8</accession>
<dbReference type="EC" id="5.2.1.8"/>
<dbReference type="EMBL" id="AJ133755">
    <property type="protein sequence ID" value="CAB94994.1"/>
    <property type="molecule type" value="mRNA"/>
</dbReference>
<dbReference type="SMR" id="Q9LEK8"/>
<dbReference type="GO" id="GO:0005829">
    <property type="term" value="C:cytosol"/>
    <property type="evidence" value="ECO:0007669"/>
    <property type="project" value="TreeGrafter"/>
</dbReference>
<dbReference type="GO" id="GO:0005634">
    <property type="term" value="C:nucleus"/>
    <property type="evidence" value="ECO:0007669"/>
    <property type="project" value="UniProtKB-SubCell"/>
</dbReference>
<dbReference type="GO" id="GO:0003755">
    <property type="term" value="F:peptidyl-prolyl cis-trans isomerase activity"/>
    <property type="evidence" value="ECO:0007669"/>
    <property type="project" value="UniProtKB-KW"/>
</dbReference>
<dbReference type="FunFam" id="3.10.50.40:FF:000010">
    <property type="entry name" value="Peptidyl-prolyl cis-trans isomerase Pin1"/>
    <property type="match status" value="1"/>
</dbReference>
<dbReference type="Gene3D" id="3.10.50.40">
    <property type="match status" value="1"/>
</dbReference>
<dbReference type="InterPro" id="IPR046357">
    <property type="entry name" value="PPIase_dom_sf"/>
</dbReference>
<dbReference type="InterPro" id="IPR051370">
    <property type="entry name" value="PPIase_Pin1"/>
</dbReference>
<dbReference type="InterPro" id="IPR000297">
    <property type="entry name" value="PPIase_PpiC"/>
</dbReference>
<dbReference type="InterPro" id="IPR023058">
    <property type="entry name" value="PPIase_PpiC_CS"/>
</dbReference>
<dbReference type="PANTHER" id="PTHR10657">
    <property type="entry name" value="PEPTIDYL-PROLYL CIS-TRANS ISOMERASE"/>
    <property type="match status" value="1"/>
</dbReference>
<dbReference type="PANTHER" id="PTHR10657:SF41">
    <property type="entry name" value="PEPTIDYL-PROLYL CIS-TRANS ISOMERASE PIN1"/>
    <property type="match status" value="1"/>
</dbReference>
<dbReference type="Pfam" id="PF00639">
    <property type="entry name" value="Rotamase"/>
    <property type="match status" value="1"/>
</dbReference>
<dbReference type="SUPFAM" id="SSF54534">
    <property type="entry name" value="FKBP-like"/>
    <property type="match status" value="1"/>
</dbReference>
<dbReference type="PROSITE" id="PS01096">
    <property type="entry name" value="PPIC_PPIASE_1"/>
    <property type="match status" value="1"/>
</dbReference>
<dbReference type="PROSITE" id="PS50198">
    <property type="entry name" value="PPIC_PPIASE_2"/>
    <property type="match status" value="1"/>
</dbReference>
<feature type="chain" id="PRO_0000193441" description="Peptidyl-prolyl cis-trans isomerase Pin1">
    <location>
        <begin position="1"/>
        <end position="118"/>
    </location>
</feature>
<feature type="domain" description="PpiC" evidence="1">
    <location>
        <begin position="3"/>
        <end position="118"/>
    </location>
</feature>
<feature type="region of interest" description="Disordered" evidence="2">
    <location>
        <begin position="1"/>
        <end position="37"/>
    </location>
</feature>
<feature type="region of interest" description="Disordered" evidence="2">
    <location>
        <begin position="61"/>
        <end position="84"/>
    </location>
</feature>
<feature type="compositionally biased region" description="Basic residues" evidence="2">
    <location>
        <begin position="12"/>
        <end position="22"/>
    </location>
</feature>
<gene>
    <name type="primary">PARV12.8</name>
</gene>
<organism>
    <name type="scientific">Digitalis lanata</name>
    <name type="common">Grecian foxglove</name>
    <dbReference type="NCBI Taxonomy" id="49450"/>
    <lineage>
        <taxon>Eukaryota</taxon>
        <taxon>Viridiplantae</taxon>
        <taxon>Streptophyta</taxon>
        <taxon>Embryophyta</taxon>
        <taxon>Tracheophyta</taxon>
        <taxon>Spermatophyta</taxon>
        <taxon>Magnoliopsida</taxon>
        <taxon>eudicotyledons</taxon>
        <taxon>Gunneridae</taxon>
        <taxon>Pentapetalae</taxon>
        <taxon>asterids</taxon>
        <taxon>lamiids</taxon>
        <taxon>Lamiales</taxon>
        <taxon>Plantaginaceae</taxon>
        <taxon>Digitalideae</taxon>
        <taxon>Digitalis</taxon>
    </lineage>
</organism>